<proteinExistence type="evidence at transcript level"/>
<gene>
    <name type="primary">XYLT1</name>
</gene>
<organism>
    <name type="scientific">Canis lupus familiaris</name>
    <name type="common">Dog</name>
    <name type="synonym">Canis familiaris</name>
    <dbReference type="NCBI Taxonomy" id="9615"/>
    <lineage>
        <taxon>Eukaryota</taxon>
        <taxon>Metazoa</taxon>
        <taxon>Chordata</taxon>
        <taxon>Craniata</taxon>
        <taxon>Vertebrata</taxon>
        <taxon>Euteleostomi</taxon>
        <taxon>Mammalia</taxon>
        <taxon>Eutheria</taxon>
        <taxon>Laurasiatheria</taxon>
        <taxon>Carnivora</taxon>
        <taxon>Caniformia</taxon>
        <taxon>Canidae</taxon>
        <taxon>Canis</taxon>
    </lineage>
</organism>
<dbReference type="EC" id="2.4.2.26" evidence="3"/>
<dbReference type="EMBL" id="AJ866719">
    <property type="protein sequence ID" value="CAI28923.1"/>
    <property type="molecule type" value="mRNA"/>
</dbReference>
<dbReference type="RefSeq" id="NP_001008718.1">
    <property type="nucleotide sequence ID" value="NM_001008718.1"/>
</dbReference>
<dbReference type="SMR" id="Q5QQ56"/>
<dbReference type="FunCoup" id="Q5QQ56">
    <property type="interactions" value="307"/>
</dbReference>
<dbReference type="STRING" id="9615.ENSCAFP00000044550"/>
<dbReference type="CAZy" id="GT14">
    <property type="family name" value="Glycosyltransferase Family 14"/>
</dbReference>
<dbReference type="GlyCosmos" id="Q5QQ56">
    <property type="glycosylation" value="3 sites, No reported glycans"/>
</dbReference>
<dbReference type="PaxDb" id="9612-ENSCAFP00000026851"/>
<dbReference type="GeneID" id="494008"/>
<dbReference type="KEGG" id="cfa:494008"/>
<dbReference type="CTD" id="64131"/>
<dbReference type="eggNOG" id="KOG0799">
    <property type="taxonomic scope" value="Eukaryota"/>
</dbReference>
<dbReference type="InParanoid" id="Q5QQ56"/>
<dbReference type="OrthoDB" id="11176at33554"/>
<dbReference type="UniPathway" id="UPA00755"/>
<dbReference type="UniPathway" id="UPA00756"/>
<dbReference type="Proteomes" id="UP000002254">
    <property type="component" value="Unplaced"/>
</dbReference>
<dbReference type="Proteomes" id="UP000694429">
    <property type="component" value="Unplaced"/>
</dbReference>
<dbReference type="Proteomes" id="UP000694542">
    <property type="component" value="Unplaced"/>
</dbReference>
<dbReference type="Proteomes" id="UP000805418">
    <property type="component" value="Unplaced"/>
</dbReference>
<dbReference type="GO" id="GO:0005615">
    <property type="term" value="C:extracellular space"/>
    <property type="evidence" value="ECO:0000250"/>
    <property type="project" value="UniProtKB"/>
</dbReference>
<dbReference type="GO" id="GO:0000137">
    <property type="term" value="C:Golgi cis cisterna"/>
    <property type="evidence" value="ECO:0000250"/>
    <property type="project" value="UniProtKB"/>
</dbReference>
<dbReference type="GO" id="GO:0000139">
    <property type="term" value="C:Golgi membrane"/>
    <property type="evidence" value="ECO:0000250"/>
    <property type="project" value="UniProtKB"/>
</dbReference>
<dbReference type="GO" id="GO:0046872">
    <property type="term" value="F:metal ion binding"/>
    <property type="evidence" value="ECO:0007669"/>
    <property type="project" value="UniProtKB-KW"/>
</dbReference>
<dbReference type="GO" id="GO:0030158">
    <property type="term" value="F:protein xylosyltransferase activity"/>
    <property type="evidence" value="ECO:0000250"/>
    <property type="project" value="UniProtKB"/>
</dbReference>
<dbReference type="GO" id="GO:0050650">
    <property type="term" value="P:chondroitin sulfate proteoglycan biosynthetic process"/>
    <property type="evidence" value="ECO:0000250"/>
    <property type="project" value="UniProtKB"/>
</dbReference>
<dbReference type="GO" id="GO:0048706">
    <property type="term" value="P:embryonic skeletal system development"/>
    <property type="evidence" value="ECO:0000250"/>
    <property type="project" value="UniProtKB"/>
</dbReference>
<dbReference type="GO" id="GO:0015012">
    <property type="term" value="P:heparan sulfate proteoglycan biosynthetic process"/>
    <property type="evidence" value="ECO:0000250"/>
    <property type="project" value="UniProtKB"/>
</dbReference>
<dbReference type="GO" id="GO:0043931">
    <property type="term" value="P:ossification involved in bone maturation"/>
    <property type="evidence" value="ECO:0000250"/>
    <property type="project" value="UniProtKB"/>
</dbReference>
<dbReference type="GO" id="GO:0030166">
    <property type="term" value="P:proteoglycan biosynthetic process"/>
    <property type="evidence" value="ECO:0000250"/>
    <property type="project" value="UniProtKB"/>
</dbReference>
<dbReference type="InterPro" id="IPR003406">
    <property type="entry name" value="Glyco_trans_14"/>
</dbReference>
<dbReference type="InterPro" id="IPR043538">
    <property type="entry name" value="XYLT"/>
</dbReference>
<dbReference type="InterPro" id="IPR024448">
    <property type="entry name" value="XylT_C"/>
</dbReference>
<dbReference type="PANTHER" id="PTHR46025:SF2">
    <property type="entry name" value="XYLOSYLTRANSFERASE 1"/>
    <property type="match status" value="1"/>
</dbReference>
<dbReference type="PANTHER" id="PTHR46025">
    <property type="entry name" value="XYLOSYLTRANSFERASE OXT"/>
    <property type="match status" value="1"/>
</dbReference>
<dbReference type="Pfam" id="PF02485">
    <property type="entry name" value="Branch"/>
    <property type="match status" value="1"/>
</dbReference>
<dbReference type="Pfam" id="PF12529">
    <property type="entry name" value="Xylo_C"/>
    <property type="match status" value="1"/>
</dbReference>
<name>XYLT1_CANLF</name>
<keyword id="KW-1015">Disulfide bond</keyword>
<keyword id="KW-0325">Glycoprotein</keyword>
<keyword id="KW-0328">Glycosyltransferase</keyword>
<keyword id="KW-0333">Golgi apparatus</keyword>
<keyword id="KW-0472">Membrane</keyword>
<keyword id="KW-0479">Metal-binding</keyword>
<keyword id="KW-1185">Reference proteome</keyword>
<keyword id="KW-0735">Signal-anchor</keyword>
<keyword id="KW-0808">Transferase</keyword>
<keyword id="KW-0812">Transmembrane</keyword>
<keyword id="KW-1133">Transmembrane helix</keyword>
<sequence>MVAAPSARRLVRRSHSALLAALTVLLLQTLVGWNFSSLHSGAGERRGGAAAGCTEQPAPPPAPAPRRERRDLPPGPAAPLGACCGGGGRGPPARARARALAGCPEEPRPQQPAGQGALPTRALDGYFSHRPKEKVRTDSNNENSVPKDFENVDNSNFAPRTQKQKHQPELAKKPPSRQKELLKRRLEQEEKGKGQSFPGKGTHEALPPGGRAAVNGSHGKDAPRQPHTRKSGGGSPELRYDQPPKCDISGKEAISALSRAKSKHCRQEIGDTYCRHKLGMLMPKKVTRFCSLEGKANKNVQWDEDSVEYMLANPVRIAFVLVVHGRASRQLQRMFKAIYHKDHFYYIHVDKRSNYLHRQVLQFARQYGNVRVTPWRMATIWGGASLLSTYLQSMRDLLEMTDWPWDFFINLSAADYPIRTNDQLVAFLSRYRDMNFLKSHGRDNARFIRKQGLDRLFLECDAHMWRLGDRRIPEGIAVDGGSDWFLLNRKFVEYVTFSTDDLVTKMKQFYSYTLLPAESFFHTVLENSPHCDTMVDNNLRITNWNRKLGCKCQYKHIVDWCGCSPNDFKPQDFHRFQQTARPTFFARKFEAVVNQEIIGQLDYYLYGNYPAGTPGLRSYWENVYDEPDGIHSLSDVALTLYHSFARLGLRRAESSLHVETGNSCRYYPMGHPASVHLYFLADRFQGFLIKHHATNLAVSKLETLETWVMPKKVFKIASPPSDFGRLQFSEVRVGTDWDAKERLFRNFGGLLGPMDEPVGMQKWGKGPNVTVTVIWVDPVNIIAATYDILIESTAEFTHYKPPLNLPLRPGVWTVKILHHWVPVAETKFLVAPLTFSNRQPIKPEEVLKLHNGPLRSAYMEQSFQSLNPVLSLPISPAQVEQARRNAGSTGATLEHWLDSLVGGTWTAMDICATGPTACPVMQTCTHTAWSSFSPDPKSELGAVKPDGRLR</sequence>
<comment type="function">
    <text evidence="2">Catalyzes the first step in the biosynthesis of chondroitin sulfate and dermatan sulfate proteoglycans, such as DCN. Transfers D-xylose from UDP-D-xylose to specific serine residues of the core protein. Required for normal maturation of chondrocytes during bone development, normal onset of ossification and normal embryonic and postnatal skeleton development, especially of the long bones.</text>
</comment>
<comment type="catalytic activity">
    <reaction evidence="3">
        <text>UDP-alpha-D-xylose + L-seryl-[protein] = 3-O-(beta-D-xylosyl)-L-seryl-[protein] + UDP + H(+)</text>
        <dbReference type="Rhea" id="RHEA:50192"/>
        <dbReference type="Rhea" id="RHEA-COMP:9863"/>
        <dbReference type="Rhea" id="RHEA-COMP:12567"/>
        <dbReference type="ChEBI" id="CHEBI:15378"/>
        <dbReference type="ChEBI" id="CHEBI:29999"/>
        <dbReference type="ChEBI" id="CHEBI:57632"/>
        <dbReference type="ChEBI" id="CHEBI:58223"/>
        <dbReference type="ChEBI" id="CHEBI:132085"/>
        <dbReference type="EC" id="2.4.2.26"/>
    </reaction>
</comment>
<comment type="cofactor">
    <cofactor evidence="3">
        <name>a divalent metal cation</name>
        <dbReference type="ChEBI" id="CHEBI:60240"/>
    </cofactor>
</comment>
<comment type="pathway">
    <text evidence="3">Glycan metabolism; chondroitin sulfate biosynthesis.</text>
</comment>
<comment type="pathway">
    <text evidence="3">Glycan metabolism; heparan sulfate biosynthesis.</text>
</comment>
<comment type="subunit">
    <text evidence="3">Monomer.</text>
</comment>
<comment type="subcellular location">
    <subcellularLocation>
        <location evidence="3">Golgi apparatus membrane</location>
        <topology evidence="1">Single-pass type II membrane protein</topology>
    </subcellularLocation>
</comment>
<comment type="PTM">
    <text evidence="3">Contains 7 disulfide bonds.</text>
</comment>
<comment type="PTM">
    <text evidence="3">N-glycosylated.</text>
</comment>
<comment type="similarity">
    <text evidence="6">Belongs to the glycosyltransferase 14 family. XylT subfamily.</text>
</comment>
<protein>
    <recommendedName>
        <fullName>Xylosyltransferase 1</fullName>
        <ecNumber evidence="3">2.4.2.26</ecNumber>
    </recommendedName>
    <alternativeName>
        <fullName>Peptide O-xylosyltransferase 1</fullName>
    </alternativeName>
    <alternativeName>
        <fullName>Xylosyltransferase I</fullName>
    </alternativeName>
</protein>
<evidence type="ECO:0000250" key="1"/>
<evidence type="ECO:0000250" key="2">
    <source>
        <dbReference type="UniProtKB" id="Q811B1"/>
    </source>
</evidence>
<evidence type="ECO:0000250" key="3">
    <source>
        <dbReference type="UniProtKB" id="Q86Y38"/>
    </source>
</evidence>
<evidence type="ECO:0000255" key="4"/>
<evidence type="ECO:0000256" key="5">
    <source>
        <dbReference type="SAM" id="MobiDB-lite"/>
    </source>
</evidence>
<evidence type="ECO:0000305" key="6"/>
<feature type="chain" id="PRO_0000191399" description="Xylosyltransferase 1">
    <location>
        <begin position="1"/>
        <end position="950"/>
    </location>
</feature>
<feature type="topological domain" description="Cytoplasmic" evidence="4">
    <location>
        <begin position="1"/>
        <end position="17"/>
    </location>
</feature>
<feature type="transmembrane region" description="Helical; Signal-anchor for type II membrane protein" evidence="4">
    <location>
        <begin position="18"/>
        <end position="38"/>
    </location>
</feature>
<feature type="topological domain" description="Lumenal" evidence="4">
    <location>
        <begin position="39"/>
        <end position="950"/>
    </location>
</feature>
<feature type="region of interest" description="Disordered" evidence="5">
    <location>
        <begin position="42"/>
        <end position="246"/>
    </location>
</feature>
<feature type="region of interest" description="Disordered" evidence="5">
    <location>
        <begin position="931"/>
        <end position="950"/>
    </location>
</feature>
<feature type="compositionally biased region" description="Low complexity" evidence="5">
    <location>
        <begin position="91"/>
        <end position="104"/>
    </location>
</feature>
<feature type="compositionally biased region" description="Basic and acidic residues" evidence="5">
    <location>
        <begin position="134"/>
        <end position="150"/>
    </location>
</feature>
<feature type="compositionally biased region" description="Polar residues" evidence="5">
    <location>
        <begin position="152"/>
        <end position="161"/>
    </location>
</feature>
<feature type="compositionally biased region" description="Basic and acidic residues" evidence="5">
    <location>
        <begin position="166"/>
        <end position="193"/>
    </location>
</feature>
<feature type="binding site" evidence="3">
    <location>
        <position position="322"/>
    </location>
    <ligand>
        <name>UDP-alpha-D-xylose</name>
        <dbReference type="ChEBI" id="CHEBI:57632"/>
    </ligand>
</feature>
<feature type="binding site" evidence="3">
    <location>
        <position position="350"/>
    </location>
    <ligand>
        <name>UDP-alpha-D-xylose</name>
        <dbReference type="ChEBI" id="CHEBI:57632"/>
    </ligand>
</feature>
<feature type="binding site" evidence="3">
    <location>
        <begin position="379"/>
        <end position="381"/>
    </location>
    <ligand>
        <name>UDP-alpha-D-xylose</name>
        <dbReference type="ChEBI" id="CHEBI:57632"/>
    </ligand>
</feature>
<feature type="binding site" evidence="3">
    <location>
        <begin position="483"/>
        <end position="484"/>
    </location>
    <ligand>
        <name>UDP-alpha-D-xylose</name>
        <dbReference type="ChEBI" id="CHEBI:57632"/>
    </ligand>
</feature>
<feature type="binding site" evidence="3">
    <location>
        <position position="564"/>
    </location>
    <ligand>
        <name>UDP-alpha-D-xylose</name>
        <dbReference type="ChEBI" id="CHEBI:57632"/>
    </ligand>
</feature>
<feature type="binding site" evidence="3">
    <location>
        <begin position="587"/>
        <end position="588"/>
    </location>
    <ligand>
        <name>UDP-alpha-D-xylose</name>
        <dbReference type="ChEBI" id="CHEBI:57632"/>
    </ligand>
</feature>
<feature type="glycosylation site" description="N-linked (GlcNAc...) asparagine" evidence="4">
    <location>
        <position position="215"/>
    </location>
</feature>
<feature type="glycosylation site" description="N-linked (GlcNAc...) asparagine" evidence="4">
    <location>
        <position position="410"/>
    </location>
</feature>
<feature type="glycosylation site" description="N-linked (GlcNAc...) asparagine" evidence="4">
    <location>
        <position position="768"/>
    </location>
</feature>
<feature type="disulfide bond" evidence="3">
    <location>
        <begin position="246"/>
        <end position="274"/>
    </location>
</feature>
<feature type="disulfide bond" evidence="3">
    <location>
        <begin position="290"/>
        <end position="531"/>
    </location>
</feature>
<feature type="disulfide bond" evidence="3">
    <location>
        <begin position="550"/>
        <end position="563"/>
    </location>
</feature>
<feature type="disulfide bond" evidence="3">
    <location>
        <begin position="552"/>
        <end position="561"/>
    </location>
</feature>
<feature type="disulfide bond" evidence="3">
    <location>
        <begin position="664"/>
        <end position="918"/>
    </location>
</feature>
<feature type="disulfide bond" evidence="3">
    <location>
        <begin position="911"/>
        <end position="924"/>
    </location>
</feature>
<reference key="1">
    <citation type="submission" date="2004-11" db="EMBL/GenBank/DDBJ databases">
        <title>Phylogeny of animal protein xylosyltransferases.</title>
        <authorList>
            <person name="Ouzzine M."/>
            <person name="Fournel-Gigleux S."/>
            <person name="Mollicone R."/>
            <person name="Oriol R."/>
        </authorList>
    </citation>
    <scope>NUCLEOTIDE SEQUENCE [MRNA]</scope>
</reference>
<accession>Q5QQ56</accession>